<reference key="1">
    <citation type="journal article" date="2003" name="Proc. Natl. Acad. Sci. U.S.A.">
        <title>Complete genome sequence of the Q-fever pathogen, Coxiella burnetii.</title>
        <authorList>
            <person name="Seshadri R."/>
            <person name="Paulsen I.T."/>
            <person name="Eisen J.A."/>
            <person name="Read T.D."/>
            <person name="Nelson K.E."/>
            <person name="Nelson W.C."/>
            <person name="Ward N.L."/>
            <person name="Tettelin H."/>
            <person name="Davidsen T.M."/>
            <person name="Beanan M.J."/>
            <person name="DeBoy R.T."/>
            <person name="Daugherty S.C."/>
            <person name="Brinkac L.M."/>
            <person name="Madupu R."/>
            <person name="Dodson R.J."/>
            <person name="Khouri H.M."/>
            <person name="Lee K.H."/>
            <person name="Carty H.A."/>
            <person name="Scanlan D."/>
            <person name="Heinzen R.A."/>
            <person name="Thompson H.A."/>
            <person name="Samuel J.E."/>
            <person name="Fraser C.M."/>
            <person name="Heidelberg J.F."/>
        </authorList>
    </citation>
    <scope>NUCLEOTIDE SEQUENCE [LARGE SCALE GENOMIC DNA]</scope>
    <source>
        <strain>RSA 493 / Nine Mile phase I</strain>
    </source>
</reference>
<name>RL25_COXBU</name>
<accession>Q83AP1</accession>
<feature type="chain" id="PRO_0000181542" description="Large ribosomal subunit protein bL25">
    <location>
        <begin position="1"/>
        <end position="244"/>
    </location>
</feature>
<feature type="region of interest" description="Disordered" evidence="2">
    <location>
        <begin position="197"/>
        <end position="244"/>
    </location>
</feature>
<feature type="compositionally biased region" description="Low complexity" evidence="2">
    <location>
        <begin position="204"/>
        <end position="215"/>
    </location>
</feature>
<proteinExistence type="inferred from homology"/>
<sequence>MAAESFELIAELREFTGKSAARRMRRFEDKVPGTVYGAGKAPQSITLLQKDLLKALESESTFSSILTLKVGDKKQKVILKALQRHHTKPKIVHIDFQRIKASEKLIMNVPLHFLGEDDCPGVEAGGVVSHLQSEVEIRCLPADLPEYIEVDLSHLQLDESVHLSNLKLPAGVGLTSAVDEEHDSPIASVHMPRVSKADVEAEAAEAALAKEAATEAAEEEETEKPASEAEASGEAEQADTDKKE</sequence>
<comment type="function">
    <text evidence="1">This is one of the proteins that binds to the 5S RNA in the ribosome where it forms part of the central protuberance.</text>
</comment>
<comment type="subunit">
    <text evidence="1">Part of the 50S ribosomal subunit; part of the 5S rRNA/L5/L18/L25 subcomplex. Contacts the 5S rRNA. Binds to the 5S rRNA independently of L5 and L18.</text>
</comment>
<comment type="similarity">
    <text evidence="1">Belongs to the bacterial ribosomal protein bL25 family. CTC subfamily.</text>
</comment>
<keyword id="KW-1185">Reference proteome</keyword>
<keyword id="KW-0687">Ribonucleoprotein</keyword>
<keyword id="KW-0689">Ribosomal protein</keyword>
<keyword id="KW-0694">RNA-binding</keyword>
<keyword id="KW-0699">rRNA-binding</keyword>
<dbReference type="EMBL" id="AE016828">
    <property type="protein sequence ID" value="AAO91333.1"/>
    <property type="molecule type" value="Genomic_DNA"/>
</dbReference>
<dbReference type="RefSeq" id="NP_820819.1">
    <property type="nucleotide sequence ID" value="NC_002971.3"/>
</dbReference>
<dbReference type="RefSeq" id="WP_005770208.1">
    <property type="nucleotide sequence ID" value="NZ_CCYB01000008.1"/>
</dbReference>
<dbReference type="SMR" id="Q83AP1"/>
<dbReference type="STRING" id="227377.CBU_1840"/>
<dbReference type="EnsemblBacteria" id="AAO91333">
    <property type="protein sequence ID" value="AAO91333"/>
    <property type="gene ID" value="CBU_1840"/>
</dbReference>
<dbReference type="GeneID" id="1209752"/>
<dbReference type="KEGG" id="cbu:CBU_1840"/>
<dbReference type="PATRIC" id="fig|227377.7.peg.1823"/>
<dbReference type="eggNOG" id="COG1825">
    <property type="taxonomic scope" value="Bacteria"/>
</dbReference>
<dbReference type="HOGENOM" id="CLU_075939_0_1_6"/>
<dbReference type="OrthoDB" id="9806411at2"/>
<dbReference type="Proteomes" id="UP000002671">
    <property type="component" value="Chromosome"/>
</dbReference>
<dbReference type="GO" id="GO:0022625">
    <property type="term" value="C:cytosolic large ribosomal subunit"/>
    <property type="evidence" value="ECO:0000318"/>
    <property type="project" value="GO_Central"/>
</dbReference>
<dbReference type="GO" id="GO:0008097">
    <property type="term" value="F:5S rRNA binding"/>
    <property type="evidence" value="ECO:0000318"/>
    <property type="project" value="GO_Central"/>
</dbReference>
<dbReference type="GO" id="GO:0003735">
    <property type="term" value="F:structural constituent of ribosome"/>
    <property type="evidence" value="ECO:0007669"/>
    <property type="project" value="InterPro"/>
</dbReference>
<dbReference type="GO" id="GO:0006412">
    <property type="term" value="P:translation"/>
    <property type="evidence" value="ECO:0000318"/>
    <property type="project" value="GO_Central"/>
</dbReference>
<dbReference type="CDD" id="cd00495">
    <property type="entry name" value="Ribosomal_L25_TL5_CTC"/>
    <property type="match status" value="1"/>
</dbReference>
<dbReference type="FunFam" id="2.170.120.20:FF:000003">
    <property type="entry name" value="50S ribosomal protein L25"/>
    <property type="match status" value="1"/>
</dbReference>
<dbReference type="Gene3D" id="2.170.120.20">
    <property type="entry name" value="Ribosomal protein L25, beta domain"/>
    <property type="match status" value="1"/>
</dbReference>
<dbReference type="Gene3D" id="2.40.240.10">
    <property type="entry name" value="Ribosomal Protein L25, Chain P"/>
    <property type="match status" value="1"/>
</dbReference>
<dbReference type="HAMAP" id="MF_01334">
    <property type="entry name" value="Ribosomal_bL25_CTC"/>
    <property type="match status" value="1"/>
</dbReference>
<dbReference type="InterPro" id="IPR020056">
    <property type="entry name" value="Rbsml_bL25/Gln-tRNA_synth_N"/>
</dbReference>
<dbReference type="InterPro" id="IPR011035">
    <property type="entry name" value="Ribosomal_bL25/Gln-tRNA_synth"/>
</dbReference>
<dbReference type="InterPro" id="IPR020057">
    <property type="entry name" value="Ribosomal_bL25_b-dom"/>
</dbReference>
<dbReference type="InterPro" id="IPR037121">
    <property type="entry name" value="Ribosomal_bL25_C"/>
</dbReference>
<dbReference type="InterPro" id="IPR001021">
    <property type="entry name" value="Ribosomal_bL25_long"/>
</dbReference>
<dbReference type="InterPro" id="IPR029751">
    <property type="entry name" value="Ribosomal_L25_dom"/>
</dbReference>
<dbReference type="InterPro" id="IPR020930">
    <property type="entry name" value="Ribosomal_uL5_bac-type"/>
</dbReference>
<dbReference type="NCBIfam" id="TIGR00731">
    <property type="entry name" value="bL25_bact_ctc"/>
    <property type="match status" value="1"/>
</dbReference>
<dbReference type="NCBIfam" id="NF004128">
    <property type="entry name" value="PRK05618.1-2"/>
    <property type="match status" value="1"/>
</dbReference>
<dbReference type="NCBIfam" id="NF004130">
    <property type="entry name" value="PRK05618.1-5"/>
    <property type="match status" value="1"/>
</dbReference>
<dbReference type="NCBIfam" id="NF004612">
    <property type="entry name" value="PRK05943.1"/>
    <property type="match status" value="1"/>
</dbReference>
<dbReference type="PANTHER" id="PTHR33284">
    <property type="entry name" value="RIBOSOMAL PROTEIN L25/GLN-TRNA SYNTHETASE, ANTI-CODON-BINDING DOMAIN-CONTAINING PROTEIN"/>
    <property type="match status" value="1"/>
</dbReference>
<dbReference type="PANTHER" id="PTHR33284:SF1">
    <property type="entry name" value="RIBOSOMAL PROTEIN L25_GLN-TRNA SYNTHETASE, ANTI-CODON-BINDING DOMAIN-CONTAINING PROTEIN"/>
    <property type="match status" value="1"/>
</dbReference>
<dbReference type="Pfam" id="PF01386">
    <property type="entry name" value="Ribosomal_L25p"/>
    <property type="match status" value="1"/>
</dbReference>
<dbReference type="Pfam" id="PF14693">
    <property type="entry name" value="Ribosomal_TL5_C"/>
    <property type="match status" value="1"/>
</dbReference>
<dbReference type="SUPFAM" id="SSF50715">
    <property type="entry name" value="Ribosomal protein L25-like"/>
    <property type="match status" value="1"/>
</dbReference>
<evidence type="ECO:0000255" key="1">
    <source>
        <dbReference type="HAMAP-Rule" id="MF_01334"/>
    </source>
</evidence>
<evidence type="ECO:0000256" key="2">
    <source>
        <dbReference type="SAM" id="MobiDB-lite"/>
    </source>
</evidence>
<evidence type="ECO:0000305" key="3"/>
<gene>
    <name evidence="1" type="primary">rplY</name>
    <name evidence="1" type="synonym">ctc</name>
    <name type="ordered locus">CBU_1840</name>
</gene>
<organism>
    <name type="scientific">Coxiella burnetii (strain RSA 493 / Nine Mile phase I)</name>
    <dbReference type="NCBI Taxonomy" id="227377"/>
    <lineage>
        <taxon>Bacteria</taxon>
        <taxon>Pseudomonadati</taxon>
        <taxon>Pseudomonadota</taxon>
        <taxon>Gammaproteobacteria</taxon>
        <taxon>Legionellales</taxon>
        <taxon>Coxiellaceae</taxon>
        <taxon>Coxiella</taxon>
    </lineage>
</organism>
<protein>
    <recommendedName>
        <fullName evidence="1">Large ribosomal subunit protein bL25</fullName>
    </recommendedName>
    <alternativeName>
        <fullName evidence="3">50S ribosomal protein L25</fullName>
    </alternativeName>
    <alternativeName>
        <fullName evidence="1">General stress protein CTC</fullName>
    </alternativeName>
</protein>